<protein>
    <recommendedName>
        <fullName>V-set and transmembrane domain-containing protein 2-like protein</fullName>
    </recommendedName>
</protein>
<dbReference type="EMBL" id="AK056177">
    <property type="protein sequence ID" value="BAB71113.1"/>
    <property type="molecule type" value="mRNA"/>
</dbReference>
<dbReference type="EMBL" id="AL834410">
    <property type="protein sequence ID" value="CAD39072.2"/>
    <property type="molecule type" value="mRNA"/>
</dbReference>
<dbReference type="EMBL" id="AL109964">
    <property type="status" value="NOT_ANNOTATED_CDS"/>
    <property type="molecule type" value="Genomic_DNA"/>
</dbReference>
<dbReference type="EMBL" id="CH471077">
    <property type="protein sequence ID" value="EAW76051.1"/>
    <property type="molecule type" value="Genomic_DNA"/>
</dbReference>
<dbReference type="EMBL" id="CH471077">
    <property type="protein sequence ID" value="EAW76053.1"/>
    <property type="molecule type" value="Genomic_DNA"/>
</dbReference>
<dbReference type="EMBL" id="BC033818">
    <property type="protein sequence ID" value="AAH33818.1"/>
    <property type="molecule type" value="mRNA"/>
</dbReference>
<dbReference type="CCDS" id="CCDS13299.1">
    <molecule id="Q96N03-1"/>
</dbReference>
<dbReference type="RefSeq" id="NP_542174.1">
    <molecule id="Q96N03-1"/>
    <property type="nucleotide sequence ID" value="NM_080607.3"/>
</dbReference>
<dbReference type="BioGRID" id="126121">
    <property type="interactions" value="5"/>
</dbReference>
<dbReference type="FunCoup" id="Q96N03">
    <property type="interactions" value="441"/>
</dbReference>
<dbReference type="IntAct" id="Q96N03">
    <property type="interactions" value="2"/>
</dbReference>
<dbReference type="STRING" id="9606.ENSP00000362560"/>
<dbReference type="TCDB" id="8.A.23.1.56">
    <property type="family name" value="the basigin (basigin) family"/>
</dbReference>
<dbReference type="iPTMnet" id="Q96N03"/>
<dbReference type="PhosphoSitePlus" id="Q96N03"/>
<dbReference type="BioMuta" id="VSTM2L"/>
<dbReference type="DMDM" id="27151481"/>
<dbReference type="jPOST" id="Q96N03"/>
<dbReference type="MassIVE" id="Q96N03"/>
<dbReference type="PaxDb" id="9606-ENSP00000362560"/>
<dbReference type="PeptideAtlas" id="Q96N03"/>
<dbReference type="ProteomicsDB" id="77436">
    <molecule id="Q96N03-1"/>
</dbReference>
<dbReference type="ProteomicsDB" id="77437">
    <molecule id="Q96N03-2"/>
</dbReference>
<dbReference type="Antibodypedia" id="26791">
    <property type="antibodies" value="51 antibodies from 16 providers"/>
</dbReference>
<dbReference type="DNASU" id="128434"/>
<dbReference type="Ensembl" id="ENST00000373459.4">
    <molecule id="Q96N03-3"/>
    <property type="protein sequence ID" value="ENSP00000362558.4"/>
    <property type="gene ID" value="ENSG00000132821.12"/>
</dbReference>
<dbReference type="Ensembl" id="ENST00000373461.9">
    <molecule id="Q96N03-1"/>
    <property type="protein sequence ID" value="ENSP00000362560.4"/>
    <property type="gene ID" value="ENSG00000132821.12"/>
</dbReference>
<dbReference type="Ensembl" id="ENST00000448944.1">
    <molecule id="Q96N03-2"/>
    <property type="protein sequence ID" value="ENSP00000406537.1"/>
    <property type="gene ID" value="ENSG00000132821.12"/>
</dbReference>
<dbReference type="GeneID" id="128434"/>
<dbReference type="KEGG" id="hsa:128434"/>
<dbReference type="MANE-Select" id="ENST00000373461.9">
    <property type="protein sequence ID" value="ENSP00000362560.4"/>
    <property type="RefSeq nucleotide sequence ID" value="NM_080607.3"/>
    <property type="RefSeq protein sequence ID" value="NP_542174.1"/>
</dbReference>
<dbReference type="UCSC" id="uc002xhk.5">
    <molecule id="Q96N03-1"/>
    <property type="organism name" value="human"/>
</dbReference>
<dbReference type="AGR" id="HGNC:16096"/>
<dbReference type="CTD" id="128434"/>
<dbReference type="DisGeNET" id="128434"/>
<dbReference type="GeneCards" id="VSTM2L"/>
<dbReference type="HGNC" id="HGNC:16096">
    <property type="gene designation" value="VSTM2L"/>
</dbReference>
<dbReference type="HPA" id="ENSG00000132821">
    <property type="expression patterns" value="Group enriched (brain, heart muscle, lymphoid tissue)"/>
</dbReference>
<dbReference type="neXtProt" id="NX_Q96N03"/>
<dbReference type="OpenTargets" id="ENSG00000132821"/>
<dbReference type="PharmGKB" id="PA162408904"/>
<dbReference type="VEuPathDB" id="HostDB:ENSG00000132821"/>
<dbReference type="eggNOG" id="ENOG502RY0S">
    <property type="taxonomic scope" value="Eukaryota"/>
</dbReference>
<dbReference type="GeneTree" id="ENSGT00940000159381"/>
<dbReference type="HOGENOM" id="CLU_1916373_0_0_1"/>
<dbReference type="InParanoid" id="Q96N03"/>
<dbReference type="OMA" id="WANKETW"/>
<dbReference type="OrthoDB" id="9870402at2759"/>
<dbReference type="PAN-GO" id="Q96N03">
    <property type="GO annotations" value="6 GO annotations based on evolutionary models"/>
</dbReference>
<dbReference type="PhylomeDB" id="Q96N03"/>
<dbReference type="TreeFam" id="TF331739"/>
<dbReference type="PathwayCommons" id="Q96N03"/>
<dbReference type="SignaLink" id="Q96N03"/>
<dbReference type="BioGRID-ORCS" id="128434">
    <property type="hits" value="17 hits in 1147 CRISPR screens"/>
</dbReference>
<dbReference type="ChiTaRS" id="VSTM2L">
    <property type="organism name" value="human"/>
</dbReference>
<dbReference type="GenomeRNAi" id="128434"/>
<dbReference type="Pharos" id="Q96N03">
    <property type="development level" value="Tdark"/>
</dbReference>
<dbReference type="PRO" id="PR:Q96N03"/>
<dbReference type="Proteomes" id="UP000005640">
    <property type="component" value="Chromosome 20"/>
</dbReference>
<dbReference type="RNAct" id="Q96N03">
    <property type="molecule type" value="protein"/>
</dbReference>
<dbReference type="Bgee" id="ENSG00000132821">
    <property type="expression patterns" value="Expressed in right atrium auricular region and 133 other cell types or tissues"/>
</dbReference>
<dbReference type="GO" id="GO:0005737">
    <property type="term" value="C:cytoplasm"/>
    <property type="evidence" value="ECO:0000314"/>
    <property type="project" value="UniProtKB"/>
</dbReference>
<dbReference type="GO" id="GO:0005576">
    <property type="term" value="C:extracellular region"/>
    <property type="evidence" value="ECO:0000314"/>
    <property type="project" value="UniProtKB"/>
</dbReference>
<dbReference type="GO" id="GO:0016020">
    <property type="term" value="C:membrane"/>
    <property type="evidence" value="ECO:0000318"/>
    <property type="project" value="GO_Central"/>
</dbReference>
<dbReference type="GO" id="GO:0043524">
    <property type="term" value="P:negative regulation of neuron apoptotic process"/>
    <property type="evidence" value="ECO:0000314"/>
    <property type="project" value="UniProtKB"/>
</dbReference>
<dbReference type="FunFam" id="2.60.40.10:FF:000735">
    <property type="entry name" value="V-set and transmembrane domain containing 2 like"/>
    <property type="match status" value="1"/>
</dbReference>
<dbReference type="Gene3D" id="2.60.40.10">
    <property type="entry name" value="Immunoglobulins"/>
    <property type="match status" value="1"/>
</dbReference>
<dbReference type="InterPro" id="IPR007110">
    <property type="entry name" value="Ig-like_dom"/>
</dbReference>
<dbReference type="InterPro" id="IPR036179">
    <property type="entry name" value="Ig-like_dom_sf"/>
</dbReference>
<dbReference type="InterPro" id="IPR013783">
    <property type="entry name" value="Ig-like_fold"/>
</dbReference>
<dbReference type="InterPro" id="IPR003599">
    <property type="entry name" value="Ig_sub"/>
</dbReference>
<dbReference type="InterPro" id="IPR013106">
    <property type="entry name" value="Ig_V-set"/>
</dbReference>
<dbReference type="InterPro" id="IPR051102">
    <property type="entry name" value="IgSF_V-set/TM_domain"/>
</dbReference>
<dbReference type="PANTHER" id="PTHR12207">
    <property type="entry name" value="V-SET AND TRANSMEMBRANE DOMAIN-CONTAINING PROTEIN"/>
    <property type="match status" value="1"/>
</dbReference>
<dbReference type="PANTHER" id="PTHR12207:SF31">
    <property type="entry name" value="V-SET AND TRANSMEMBRANE DOMAIN-CONTAINING PROTEIN 2-LIKE PROTEIN"/>
    <property type="match status" value="1"/>
</dbReference>
<dbReference type="Pfam" id="PF07686">
    <property type="entry name" value="V-set"/>
    <property type="match status" value="1"/>
</dbReference>
<dbReference type="SMART" id="SM00409">
    <property type="entry name" value="IG"/>
    <property type="match status" value="1"/>
</dbReference>
<dbReference type="SUPFAM" id="SSF48726">
    <property type="entry name" value="Immunoglobulin"/>
    <property type="match status" value="1"/>
</dbReference>
<dbReference type="PROSITE" id="PS50835">
    <property type="entry name" value="IG_LIKE"/>
    <property type="match status" value="1"/>
</dbReference>
<keyword id="KW-0025">Alternative splicing</keyword>
<keyword id="KW-1015">Disulfide bond</keyword>
<keyword id="KW-0393">Immunoglobulin domain</keyword>
<keyword id="KW-1267">Proteomics identification</keyword>
<keyword id="KW-1185">Reference proteome</keyword>
<keyword id="KW-0732">Signal</keyword>
<evidence type="ECO:0000255" key="1"/>
<evidence type="ECO:0000255" key="2">
    <source>
        <dbReference type="PROSITE-ProRule" id="PRU00114"/>
    </source>
</evidence>
<evidence type="ECO:0000256" key="3">
    <source>
        <dbReference type="SAM" id="MobiDB-lite"/>
    </source>
</evidence>
<evidence type="ECO:0000305" key="4"/>
<name>VTM2L_HUMAN</name>
<organism>
    <name type="scientific">Homo sapiens</name>
    <name type="common">Human</name>
    <dbReference type="NCBI Taxonomy" id="9606"/>
    <lineage>
        <taxon>Eukaryota</taxon>
        <taxon>Metazoa</taxon>
        <taxon>Chordata</taxon>
        <taxon>Craniata</taxon>
        <taxon>Vertebrata</taxon>
        <taxon>Euteleostomi</taxon>
        <taxon>Mammalia</taxon>
        <taxon>Eutheria</taxon>
        <taxon>Euarchontoglires</taxon>
        <taxon>Primates</taxon>
        <taxon>Haplorrhini</taxon>
        <taxon>Catarrhini</taxon>
        <taxon>Hominidae</taxon>
        <taxon>Homo</taxon>
    </lineage>
</organism>
<proteinExistence type="evidence at protein level"/>
<accession>Q96N03</accession>
<accession>E1P5V7</accession>
<accession>Q5JWZ4</accession>
<accession>Q5JWZ5</accession>
<accession>Q8ND45</accession>
<accession>Q9BR37</accession>
<sequence length="204" mass="22349">MGAPLAVALGALHYLALFLQLGGATRPAGHAPWDNHVSGHALFTETPHDMTARTGEDVEMACSFRGSGSPSYSLEIQWWYVRSHRDWTDKQAWASNQLKASQQEDAGKEATKISVVKVVGSNISHKLRLSRVKPTDEGTYECRVIDFSDGKARHHKVKAYLRVQPGENSVLHLPEAPPAAPAPPPPKPGKELRKRSVDQEACSL</sequence>
<feature type="signal peptide" evidence="1">
    <location>
        <begin position="1"/>
        <end position="24"/>
    </location>
</feature>
<feature type="chain" id="PRO_0000015164" description="V-set and transmembrane domain-containing protein 2-like protein">
    <location>
        <begin position="25"/>
        <end position="204"/>
    </location>
</feature>
<feature type="domain" description="Ig-like">
    <location>
        <begin position="41"/>
        <end position="158"/>
    </location>
</feature>
<feature type="region of interest" description="Disordered" evidence="3">
    <location>
        <begin position="168"/>
        <end position="204"/>
    </location>
</feature>
<feature type="compositionally biased region" description="Pro residues" evidence="3">
    <location>
        <begin position="175"/>
        <end position="187"/>
    </location>
</feature>
<feature type="compositionally biased region" description="Basic and acidic residues" evidence="3">
    <location>
        <begin position="188"/>
        <end position="198"/>
    </location>
</feature>
<feature type="disulfide bond" evidence="2">
    <location>
        <begin position="62"/>
        <end position="142"/>
    </location>
</feature>
<feature type="splice variant" id="VSP_026512" description="In isoform 3." evidence="4">
    <original>ALFTETPHDMTARTGEDVEMACSFRGSGSPSYSLEIQWWYVRSHRDWTDKQAWASNQLKASQQEDAGKEATKISVVKVVGSNISHKLRLSRV</original>
    <variation>GGQGGGQQHLPQAAPVPGEAHGRRHLRVPRHRLQRRQGPAPQGQGLPAGAARGELRPASARSPSRRARPAAPQARQGAEEALGGPGGLQPLD</variation>
    <location>
        <begin position="41"/>
        <end position="132"/>
    </location>
</feature>
<feature type="splice variant" id="VSP_013380" description="In isoform 2." evidence="4">
    <location>
        <begin position="98"/>
        <end position="114"/>
    </location>
</feature>
<feature type="splice variant" id="VSP_026513" description="In isoform 3." evidence="4">
    <location>
        <begin position="133"/>
        <end position="204"/>
    </location>
</feature>
<feature type="splice variant" id="VSP_026514" description="In isoform 2." evidence="4">
    <location>
        <begin position="167"/>
        <end position="204"/>
    </location>
</feature>
<feature type="sequence conflict" description="In Ref. 5; AAH33818." evidence="4" ref="5">
    <original>T</original>
    <variation>S</variation>
    <location>
        <position position="139"/>
    </location>
</feature>
<gene>
    <name type="primary">VSTM2L</name>
    <name type="synonym">C20orf102</name>
</gene>
<reference key="1">
    <citation type="journal article" date="2004" name="Nat. Genet.">
        <title>Complete sequencing and characterization of 21,243 full-length human cDNAs.</title>
        <authorList>
            <person name="Ota T."/>
            <person name="Suzuki Y."/>
            <person name="Nishikawa T."/>
            <person name="Otsuki T."/>
            <person name="Sugiyama T."/>
            <person name="Irie R."/>
            <person name="Wakamatsu A."/>
            <person name="Hayashi K."/>
            <person name="Sato H."/>
            <person name="Nagai K."/>
            <person name="Kimura K."/>
            <person name="Makita H."/>
            <person name="Sekine M."/>
            <person name="Obayashi M."/>
            <person name="Nishi T."/>
            <person name="Shibahara T."/>
            <person name="Tanaka T."/>
            <person name="Ishii S."/>
            <person name="Yamamoto J."/>
            <person name="Saito K."/>
            <person name="Kawai Y."/>
            <person name="Isono Y."/>
            <person name="Nakamura Y."/>
            <person name="Nagahari K."/>
            <person name="Murakami K."/>
            <person name="Yasuda T."/>
            <person name="Iwayanagi T."/>
            <person name="Wagatsuma M."/>
            <person name="Shiratori A."/>
            <person name="Sudo H."/>
            <person name="Hosoiri T."/>
            <person name="Kaku Y."/>
            <person name="Kodaira H."/>
            <person name="Kondo H."/>
            <person name="Sugawara M."/>
            <person name="Takahashi M."/>
            <person name="Kanda K."/>
            <person name="Yokoi T."/>
            <person name="Furuya T."/>
            <person name="Kikkawa E."/>
            <person name="Omura Y."/>
            <person name="Abe K."/>
            <person name="Kamihara K."/>
            <person name="Katsuta N."/>
            <person name="Sato K."/>
            <person name="Tanikawa M."/>
            <person name="Yamazaki M."/>
            <person name="Ninomiya K."/>
            <person name="Ishibashi T."/>
            <person name="Yamashita H."/>
            <person name="Murakawa K."/>
            <person name="Fujimori K."/>
            <person name="Tanai H."/>
            <person name="Kimata M."/>
            <person name="Watanabe M."/>
            <person name="Hiraoka S."/>
            <person name="Chiba Y."/>
            <person name="Ishida S."/>
            <person name="Ono Y."/>
            <person name="Takiguchi S."/>
            <person name="Watanabe S."/>
            <person name="Yosida M."/>
            <person name="Hotuta T."/>
            <person name="Kusano J."/>
            <person name="Kanehori K."/>
            <person name="Takahashi-Fujii A."/>
            <person name="Hara H."/>
            <person name="Tanase T.-O."/>
            <person name="Nomura Y."/>
            <person name="Togiya S."/>
            <person name="Komai F."/>
            <person name="Hara R."/>
            <person name="Takeuchi K."/>
            <person name="Arita M."/>
            <person name="Imose N."/>
            <person name="Musashino K."/>
            <person name="Yuuki H."/>
            <person name="Oshima A."/>
            <person name="Sasaki N."/>
            <person name="Aotsuka S."/>
            <person name="Yoshikawa Y."/>
            <person name="Matsunawa H."/>
            <person name="Ichihara T."/>
            <person name="Shiohata N."/>
            <person name="Sano S."/>
            <person name="Moriya S."/>
            <person name="Momiyama H."/>
            <person name="Satoh N."/>
            <person name="Takami S."/>
            <person name="Terashima Y."/>
            <person name="Suzuki O."/>
            <person name="Nakagawa S."/>
            <person name="Senoh A."/>
            <person name="Mizoguchi H."/>
            <person name="Goto Y."/>
            <person name="Shimizu F."/>
            <person name="Wakebe H."/>
            <person name="Hishigaki H."/>
            <person name="Watanabe T."/>
            <person name="Sugiyama A."/>
            <person name="Takemoto M."/>
            <person name="Kawakami B."/>
            <person name="Yamazaki M."/>
            <person name="Watanabe K."/>
            <person name="Kumagai A."/>
            <person name="Itakura S."/>
            <person name="Fukuzumi Y."/>
            <person name="Fujimori Y."/>
            <person name="Komiyama M."/>
            <person name="Tashiro H."/>
            <person name="Tanigami A."/>
            <person name="Fujiwara T."/>
            <person name="Ono T."/>
            <person name="Yamada K."/>
            <person name="Fujii Y."/>
            <person name="Ozaki K."/>
            <person name="Hirao M."/>
            <person name="Ohmori Y."/>
            <person name="Kawabata A."/>
            <person name="Hikiji T."/>
            <person name="Kobatake N."/>
            <person name="Inagaki H."/>
            <person name="Ikema Y."/>
            <person name="Okamoto S."/>
            <person name="Okitani R."/>
            <person name="Kawakami T."/>
            <person name="Noguchi S."/>
            <person name="Itoh T."/>
            <person name="Shigeta K."/>
            <person name="Senba T."/>
            <person name="Matsumura K."/>
            <person name="Nakajima Y."/>
            <person name="Mizuno T."/>
            <person name="Morinaga M."/>
            <person name="Sasaki M."/>
            <person name="Togashi T."/>
            <person name="Oyama M."/>
            <person name="Hata H."/>
            <person name="Watanabe M."/>
            <person name="Komatsu T."/>
            <person name="Mizushima-Sugano J."/>
            <person name="Satoh T."/>
            <person name="Shirai Y."/>
            <person name="Takahashi Y."/>
            <person name="Nakagawa K."/>
            <person name="Okumura K."/>
            <person name="Nagase T."/>
            <person name="Nomura N."/>
            <person name="Kikuchi H."/>
            <person name="Masuho Y."/>
            <person name="Yamashita R."/>
            <person name="Nakai K."/>
            <person name="Yada T."/>
            <person name="Nakamura Y."/>
            <person name="Ohara O."/>
            <person name="Isogai T."/>
            <person name="Sugano S."/>
        </authorList>
    </citation>
    <scope>NUCLEOTIDE SEQUENCE [LARGE SCALE MRNA] (ISOFORM 1)</scope>
</reference>
<reference key="2">
    <citation type="journal article" date="2007" name="BMC Genomics">
        <title>The full-ORF clone resource of the German cDNA consortium.</title>
        <authorList>
            <person name="Bechtel S."/>
            <person name="Rosenfelder H."/>
            <person name="Duda A."/>
            <person name="Schmidt C.P."/>
            <person name="Ernst U."/>
            <person name="Wellenreuther R."/>
            <person name="Mehrle A."/>
            <person name="Schuster C."/>
            <person name="Bahr A."/>
            <person name="Bloecker H."/>
            <person name="Heubner D."/>
            <person name="Hoerlein A."/>
            <person name="Michel G."/>
            <person name="Wedler H."/>
            <person name="Koehrer K."/>
            <person name="Ottenwaelder B."/>
            <person name="Poustka A."/>
            <person name="Wiemann S."/>
            <person name="Schupp I."/>
        </authorList>
    </citation>
    <scope>NUCLEOTIDE SEQUENCE [LARGE SCALE MRNA] (ISOFORM 1)</scope>
    <source>
        <tissue>Brain</tissue>
    </source>
</reference>
<reference key="3">
    <citation type="journal article" date="2001" name="Nature">
        <title>The DNA sequence and comparative analysis of human chromosome 20.</title>
        <authorList>
            <person name="Deloukas P."/>
            <person name="Matthews L.H."/>
            <person name="Ashurst J.L."/>
            <person name="Burton J."/>
            <person name="Gilbert J.G.R."/>
            <person name="Jones M."/>
            <person name="Stavrides G."/>
            <person name="Almeida J.P."/>
            <person name="Babbage A.K."/>
            <person name="Bagguley C.L."/>
            <person name="Bailey J."/>
            <person name="Barlow K.F."/>
            <person name="Bates K.N."/>
            <person name="Beard L.M."/>
            <person name="Beare D.M."/>
            <person name="Beasley O.P."/>
            <person name="Bird C.P."/>
            <person name="Blakey S.E."/>
            <person name="Bridgeman A.M."/>
            <person name="Brown A.J."/>
            <person name="Buck D."/>
            <person name="Burrill W.D."/>
            <person name="Butler A.P."/>
            <person name="Carder C."/>
            <person name="Carter N.P."/>
            <person name="Chapman J.C."/>
            <person name="Clamp M."/>
            <person name="Clark G."/>
            <person name="Clark L.N."/>
            <person name="Clark S.Y."/>
            <person name="Clee C.M."/>
            <person name="Clegg S."/>
            <person name="Cobley V.E."/>
            <person name="Collier R.E."/>
            <person name="Connor R.E."/>
            <person name="Corby N.R."/>
            <person name="Coulson A."/>
            <person name="Coville G.J."/>
            <person name="Deadman R."/>
            <person name="Dhami P.D."/>
            <person name="Dunn M."/>
            <person name="Ellington A.G."/>
            <person name="Frankland J.A."/>
            <person name="Fraser A."/>
            <person name="French L."/>
            <person name="Garner P."/>
            <person name="Grafham D.V."/>
            <person name="Griffiths C."/>
            <person name="Griffiths M.N.D."/>
            <person name="Gwilliam R."/>
            <person name="Hall R.E."/>
            <person name="Hammond S."/>
            <person name="Harley J.L."/>
            <person name="Heath P.D."/>
            <person name="Ho S."/>
            <person name="Holden J.L."/>
            <person name="Howden P.J."/>
            <person name="Huckle E."/>
            <person name="Hunt A.R."/>
            <person name="Hunt S.E."/>
            <person name="Jekosch K."/>
            <person name="Johnson C.M."/>
            <person name="Johnson D."/>
            <person name="Kay M.P."/>
            <person name="Kimberley A.M."/>
            <person name="King A."/>
            <person name="Knights A."/>
            <person name="Laird G.K."/>
            <person name="Lawlor S."/>
            <person name="Lehvaeslaiho M.H."/>
            <person name="Leversha M.A."/>
            <person name="Lloyd C."/>
            <person name="Lloyd D.M."/>
            <person name="Lovell J.D."/>
            <person name="Marsh V.L."/>
            <person name="Martin S.L."/>
            <person name="McConnachie L.J."/>
            <person name="McLay K."/>
            <person name="McMurray A.A."/>
            <person name="Milne S.A."/>
            <person name="Mistry D."/>
            <person name="Moore M.J.F."/>
            <person name="Mullikin J.C."/>
            <person name="Nickerson T."/>
            <person name="Oliver K."/>
            <person name="Parker A."/>
            <person name="Patel R."/>
            <person name="Pearce T.A.V."/>
            <person name="Peck A.I."/>
            <person name="Phillimore B.J.C.T."/>
            <person name="Prathalingam S.R."/>
            <person name="Plumb R.W."/>
            <person name="Ramsay H."/>
            <person name="Rice C.M."/>
            <person name="Ross M.T."/>
            <person name="Scott C.E."/>
            <person name="Sehra H.K."/>
            <person name="Shownkeen R."/>
            <person name="Sims S."/>
            <person name="Skuce C.D."/>
            <person name="Smith M.L."/>
            <person name="Soderlund C."/>
            <person name="Steward C.A."/>
            <person name="Sulston J.E."/>
            <person name="Swann R.M."/>
            <person name="Sycamore N."/>
            <person name="Taylor R."/>
            <person name="Tee L."/>
            <person name="Thomas D.W."/>
            <person name="Thorpe A."/>
            <person name="Tracey A."/>
            <person name="Tromans A.C."/>
            <person name="Vaudin M."/>
            <person name="Wall M."/>
            <person name="Wallis J.M."/>
            <person name="Whitehead S.L."/>
            <person name="Whittaker P."/>
            <person name="Willey D.L."/>
            <person name="Williams L."/>
            <person name="Williams S.A."/>
            <person name="Wilming L."/>
            <person name="Wray P.W."/>
            <person name="Hubbard T."/>
            <person name="Durbin R.M."/>
            <person name="Bentley D.R."/>
            <person name="Beck S."/>
            <person name="Rogers J."/>
        </authorList>
    </citation>
    <scope>NUCLEOTIDE SEQUENCE [LARGE SCALE GENOMIC DNA]</scope>
</reference>
<reference key="4">
    <citation type="submission" date="2005-09" db="EMBL/GenBank/DDBJ databases">
        <authorList>
            <person name="Mural R.J."/>
            <person name="Istrail S."/>
            <person name="Sutton G.G."/>
            <person name="Florea L."/>
            <person name="Halpern A.L."/>
            <person name="Mobarry C.M."/>
            <person name="Lippert R."/>
            <person name="Walenz B."/>
            <person name="Shatkay H."/>
            <person name="Dew I."/>
            <person name="Miller J.R."/>
            <person name="Flanigan M.J."/>
            <person name="Edwards N.J."/>
            <person name="Bolanos R."/>
            <person name="Fasulo D."/>
            <person name="Halldorsson B.V."/>
            <person name="Hannenhalli S."/>
            <person name="Turner R."/>
            <person name="Yooseph S."/>
            <person name="Lu F."/>
            <person name="Nusskern D.R."/>
            <person name="Shue B.C."/>
            <person name="Zheng X.H."/>
            <person name="Zhong F."/>
            <person name="Delcher A.L."/>
            <person name="Huson D.H."/>
            <person name="Kravitz S.A."/>
            <person name="Mouchard L."/>
            <person name="Reinert K."/>
            <person name="Remington K.A."/>
            <person name="Clark A.G."/>
            <person name="Waterman M.S."/>
            <person name="Eichler E.E."/>
            <person name="Adams M.D."/>
            <person name="Hunkapiller M.W."/>
            <person name="Myers E.W."/>
            <person name="Venter J.C."/>
        </authorList>
    </citation>
    <scope>NUCLEOTIDE SEQUENCE [LARGE SCALE GENOMIC DNA]</scope>
</reference>
<reference key="5">
    <citation type="journal article" date="2004" name="Genome Res.">
        <title>The status, quality, and expansion of the NIH full-length cDNA project: the Mammalian Gene Collection (MGC).</title>
        <authorList>
            <consortium name="The MGC Project Team"/>
        </authorList>
    </citation>
    <scope>NUCLEOTIDE SEQUENCE [LARGE SCALE MRNA] (ISOFORM 1)</scope>
    <source>
        <tissue>Brain</tissue>
    </source>
</reference>
<comment type="interaction">
    <interactant intactId="EBI-948213">
        <id>Q96N03</id>
    </interactant>
    <interactant intactId="EBI-930964">
        <id>P54253</id>
        <label>ATXN1</label>
    </interactant>
    <organismsDiffer>false</organismsDiffer>
    <experiments>9</experiments>
</comment>
<comment type="interaction">
    <interactant intactId="EBI-948213">
        <id>Q96N03</id>
    </interactant>
    <interactant intactId="EBI-1573056">
        <id>Q9BSQ5</id>
        <label>CCM2</label>
    </interactant>
    <organismsDiffer>false</organismsDiffer>
    <experiments>3</experiments>
</comment>
<comment type="alternative products">
    <event type="alternative splicing"/>
    <isoform>
        <id>Q96N03-1</id>
        <name>1</name>
        <sequence type="displayed"/>
    </isoform>
    <isoform>
        <id>Q96N03-2</id>
        <name>2</name>
        <sequence type="described" ref="VSP_013380 VSP_026514"/>
    </isoform>
    <isoform>
        <id>Q96N03-3</id>
        <name>3</name>
        <sequence type="described" ref="VSP_026512 VSP_026513"/>
    </isoform>
</comment>